<evidence type="ECO:0000255" key="1">
    <source>
        <dbReference type="HAMAP-Rule" id="MF_00014"/>
    </source>
</evidence>
<proteinExistence type="inferred from homology"/>
<protein>
    <recommendedName>
        <fullName evidence="1">Ribosome maturation factor RimM</fullName>
    </recommendedName>
</protein>
<gene>
    <name evidence="1" type="primary">rimM</name>
    <name type="ordered locus">PMM1605</name>
</gene>
<name>RIMM_PROMP</name>
<accession>Q7UZQ3</accession>
<sequence length="179" mass="20344">MINHNEWLIVGLITSPQGINGKIKIKSLSDFEERFTKPGKRWIQKGNETPIEFELTHGFKKPGKESFIITFKGINNRTQAENLKGQKILVKVDAIPKLSHGEYHLTELINLNVKISENNQLHIIGKVINLSNEKNNLLVIQLLKNNKEVLIPFVKEIVPIVDIKKNFILLTPPSGLLEL</sequence>
<organism>
    <name type="scientific">Prochlorococcus marinus subsp. pastoris (strain CCMP1986 / NIES-2087 / MED4)</name>
    <dbReference type="NCBI Taxonomy" id="59919"/>
    <lineage>
        <taxon>Bacteria</taxon>
        <taxon>Bacillati</taxon>
        <taxon>Cyanobacteriota</taxon>
        <taxon>Cyanophyceae</taxon>
        <taxon>Synechococcales</taxon>
        <taxon>Prochlorococcaceae</taxon>
        <taxon>Prochlorococcus</taxon>
    </lineage>
</organism>
<dbReference type="EMBL" id="BX548174">
    <property type="protein sequence ID" value="CAE20064.1"/>
    <property type="molecule type" value="Genomic_DNA"/>
</dbReference>
<dbReference type="RefSeq" id="WP_011133233.1">
    <property type="nucleotide sequence ID" value="NC_005072.1"/>
</dbReference>
<dbReference type="SMR" id="Q7UZQ3"/>
<dbReference type="STRING" id="59919.PMM1605"/>
<dbReference type="KEGG" id="pmm:PMM1605"/>
<dbReference type="eggNOG" id="COG0806">
    <property type="taxonomic scope" value="Bacteria"/>
</dbReference>
<dbReference type="HOGENOM" id="CLU_077636_3_0_3"/>
<dbReference type="OrthoDB" id="9810331at2"/>
<dbReference type="Proteomes" id="UP000001026">
    <property type="component" value="Chromosome"/>
</dbReference>
<dbReference type="GO" id="GO:0005737">
    <property type="term" value="C:cytoplasm"/>
    <property type="evidence" value="ECO:0007669"/>
    <property type="project" value="UniProtKB-SubCell"/>
</dbReference>
<dbReference type="GO" id="GO:0005840">
    <property type="term" value="C:ribosome"/>
    <property type="evidence" value="ECO:0007669"/>
    <property type="project" value="InterPro"/>
</dbReference>
<dbReference type="GO" id="GO:0043022">
    <property type="term" value="F:ribosome binding"/>
    <property type="evidence" value="ECO:0007669"/>
    <property type="project" value="InterPro"/>
</dbReference>
<dbReference type="GO" id="GO:0042274">
    <property type="term" value="P:ribosomal small subunit biogenesis"/>
    <property type="evidence" value="ECO:0007669"/>
    <property type="project" value="UniProtKB-UniRule"/>
</dbReference>
<dbReference type="GO" id="GO:0006364">
    <property type="term" value="P:rRNA processing"/>
    <property type="evidence" value="ECO:0007669"/>
    <property type="project" value="UniProtKB-UniRule"/>
</dbReference>
<dbReference type="Gene3D" id="2.30.30.240">
    <property type="entry name" value="PRC-barrel domain"/>
    <property type="match status" value="1"/>
</dbReference>
<dbReference type="Gene3D" id="2.40.30.60">
    <property type="entry name" value="RimM"/>
    <property type="match status" value="1"/>
</dbReference>
<dbReference type="HAMAP" id="MF_00014">
    <property type="entry name" value="Ribosome_mat_RimM"/>
    <property type="match status" value="1"/>
</dbReference>
<dbReference type="InterPro" id="IPR011033">
    <property type="entry name" value="PRC_barrel-like_sf"/>
</dbReference>
<dbReference type="InterPro" id="IPR056792">
    <property type="entry name" value="PRC_RimM"/>
</dbReference>
<dbReference type="InterPro" id="IPR011961">
    <property type="entry name" value="RimM"/>
</dbReference>
<dbReference type="InterPro" id="IPR002676">
    <property type="entry name" value="RimM_N"/>
</dbReference>
<dbReference type="InterPro" id="IPR036976">
    <property type="entry name" value="RimM_N_sf"/>
</dbReference>
<dbReference type="InterPro" id="IPR009000">
    <property type="entry name" value="Transl_B-barrel_sf"/>
</dbReference>
<dbReference type="NCBIfam" id="TIGR02273">
    <property type="entry name" value="16S_RimM"/>
    <property type="match status" value="1"/>
</dbReference>
<dbReference type="PANTHER" id="PTHR33692">
    <property type="entry name" value="RIBOSOME MATURATION FACTOR RIMM"/>
    <property type="match status" value="1"/>
</dbReference>
<dbReference type="PANTHER" id="PTHR33692:SF1">
    <property type="entry name" value="RIBOSOME MATURATION FACTOR RIMM"/>
    <property type="match status" value="1"/>
</dbReference>
<dbReference type="Pfam" id="PF24986">
    <property type="entry name" value="PRC_RimM"/>
    <property type="match status" value="1"/>
</dbReference>
<dbReference type="Pfam" id="PF01782">
    <property type="entry name" value="RimM"/>
    <property type="match status" value="1"/>
</dbReference>
<dbReference type="SUPFAM" id="SSF50346">
    <property type="entry name" value="PRC-barrel domain"/>
    <property type="match status" value="1"/>
</dbReference>
<dbReference type="SUPFAM" id="SSF50447">
    <property type="entry name" value="Translation proteins"/>
    <property type="match status" value="1"/>
</dbReference>
<comment type="function">
    <text evidence="1">An accessory protein needed during the final step in the assembly of 30S ribosomal subunit, possibly for assembly of the head region. Essential for efficient processing of 16S rRNA. May be needed both before and after RbfA during the maturation of 16S rRNA. It has affinity for free ribosomal 30S subunits but not for 70S ribosomes.</text>
</comment>
<comment type="subunit">
    <text evidence="1">Binds ribosomal protein uS19.</text>
</comment>
<comment type="subcellular location">
    <subcellularLocation>
        <location evidence="1">Cytoplasm</location>
    </subcellularLocation>
</comment>
<comment type="domain">
    <text evidence="1">The PRC barrel domain binds ribosomal protein uS19.</text>
</comment>
<comment type="similarity">
    <text evidence="1">Belongs to the RimM family.</text>
</comment>
<feature type="chain" id="PRO_0000163334" description="Ribosome maturation factor RimM">
    <location>
        <begin position="1"/>
        <end position="179"/>
    </location>
</feature>
<feature type="domain" description="PRC barrel" evidence="1">
    <location>
        <begin position="100"/>
        <end position="176"/>
    </location>
</feature>
<reference key="1">
    <citation type="journal article" date="2003" name="Nature">
        <title>Genome divergence in two Prochlorococcus ecotypes reflects oceanic niche differentiation.</title>
        <authorList>
            <person name="Rocap G."/>
            <person name="Larimer F.W."/>
            <person name="Lamerdin J.E."/>
            <person name="Malfatti S."/>
            <person name="Chain P."/>
            <person name="Ahlgren N.A."/>
            <person name="Arellano A."/>
            <person name="Coleman M."/>
            <person name="Hauser L."/>
            <person name="Hess W.R."/>
            <person name="Johnson Z.I."/>
            <person name="Land M.L."/>
            <person name="Lindell D."/>
            <person name="Post A.F."/>
            <person name="Regala W."/>
            <person name="Shah M."/>
            <person name="Shaw S.L."/>
            <person name="Steglich C."/>
            <person name="Sullivan M.B."/>
            <person name="Ting C.S."/>
            <person name="Tolonen A."/>
            <person name="Webb E.A."/>
            <person name="Zinser E.R."/>
            <person name="Chisholm S.W."/>
        </authorList>
    </citation>
    <scope>NUCLEOTIDE SEQUENCE [LARGE SCALE GENOMIC DNA]</scope>
    <source>
        <strain>CCMP1986 / NIES-2087 / MED4</strain>
    </source>
</reference>
<keyword id="KW-0143">Chaperone</keyword>
<keyword id="KW-0963">Cytoplasm</keyword>
<keyword id="KW-0690">Ribosome biogenesis</keyword>
<keyword id="KW-0698">rRNA processing</keyword>